<name>EXOS3_DICDI</name>
<organism>
    <name type="scientific">Dictyostelium discoideum</name>
    <name type="common">Social amoeba</name>
    <dbReference type="NCBI Taxonomy" id="44689"/>
    <lineage>
        <taxon>Eukaryota</taxon>
        <taxon>Amoebozoa</taxon>
        <taxon>Evosea</taxon>
        <taxon>Eumycetozoa</taxon>
        <taxon>Dictyostelia</taxon>
        <taxon>Dictyosteliales</taxon>
        <taxon>Dictyosteliaceae</taxon>
        <taxon>Dictyostelium</taxon>
    </lineage>
</organism>
<proteinExistence type="inferred from homology"/>
<protein>
    <recommendedName>
        <fullName>Putative exosome complex component rrp40</fullName>
    </recommendedName>
    <alternativeName>
        <fullName>Exosome component 3</fullName>
    </alternativeName>
    <alternativeName>
        <fullName>Ribosomal RNA-processing protein 40</fullName>
    </alternativeName>
</protein>
<keyword id="KW-0963">Cytoplasm</keyword>
<keyword id="KW-0271">Exosome</keyword>
<keyword id="KW-0539">Nucleus</keyword>
<keyword id="KW-0597">Phosphoprotein</keyword>
<keyword id="KW-1185">Reference proteome</keyword>
<keyword id="KW-0694">RNA-binding</keyword>
<keyword id="KW-0698">rRNA processing</keyword>
<dbReference type="EMBL" id="AAFI02000019">
    <property type="protein sequence ID" value="EAL68893.1"/>
    <property type="molecule type" value="Genomic_DNA"/>
</dbReference>
<dbReference type="RefSeq" id="XP_642864.1">
    <property type="nucleotide sequence ID" value="XM_637772.1"/>
</dbReference>
<dbReference type="SMR" id="Q7KWX9"/>
<dbReference type="FunCoup" id="Q7KWX9">
    <property type="interactions" value="640"/>
</dbReference>
<dbReference type="STRING" id="44689.Q7KWX9"/>
<dbReference type="GlyGen" id="Q7KWX9">
    <property type="glycosylation" value="1 site"/>
</dbReference>
<dbReference type="PaxDb" id="44689-DDB0168296"/>
<dbReference type="EnsemblProtists" id="EAL68893">
    <property type="protein sequence ID" value="EAL68893"/>
    <property type="gene ID" value="DDB_G0276783"/>
</dbReference>
<dbReference type="GeneID" id="8620730"/>
<dbReference type="KEGG" id="ddi:DDB_G0276783"/>
<dbReference type="dictyBase" id="DDB_G0276783"/>
<dbReference type="VEuPathDB" id="AmoebaDB:DDB_G0276783"/>
<dbReference type="eggNOG" id="KOG1004">
    <property type="taxonomic scope" value="Eukaryota"/>
</dbReference>
<dbReference type="HOGENOM" id="CLU_069847_5_1_1"/>
<dbReference type="InParanoid" id="Q7KWX9"/>
<dbReference type="OMA" id="SYMAFPN"/>
<dbReference type="PhylomeDB" id="Q7KWX9"/>
<dbReference type="Reactome" id="R-DDI-429958">
    <property type="pathway name" value="mRNA decay by 3' to 5' exoribonuclease"/>
</dbReference>
<dbReference type="Reactome" id="R-DDI-450385">
    <property type="pathway name" value="Butyrate Response Factor 1 (BRF1) binds and destabilizes mRNA"/>
</dbReference>
<dbReference type="Reactome" id="R-DDI-450513">
    <property type="pathway name" value="Tristetraprolin (TTP, ZFP36) binds and destabilizes mRNA"/>
</dbReference>
<dbReference type="Reactome" id="R-DDI-6791226">
    <property type="pathway name" value="Major pathway of rRNA processing in the nucleolus and cytosol"/>
</dbReference>
<dbReference type="PRO" id="PR:Q7KWX9"/>
<dbReference type="Proteomes" id="UP000002195">
    <property type="component" value="Chromosome 2"/>
</dbReference>
<dbReference type="GO" id="GO:0000177">
    <property type="term" value="C:cytoplasmic exosome (RNase complex)"/>
    <property type="evidence" value="ECO:0000318"/>
    <property type="project" value="GO_Central"/>
</dbReference>
<dbReference type="GO" id="GO:0000176">
    <property type="term" value="C:nuclear exosome (RNase complex)"/>
    <property type="evidence" value="ECO:0000318"/>
    <property type="project" value="GO_Central"/>
</dbReference>
<dbReference type="GO" id="GO:0005730">
    <property type="term" value="C:nucleolus"/>
    <property type="evidence" value="ECO:0007669"/>
    <property type="project" value="UniProtKB-SubCell"/>
</dbReference>
<dbReference type="GO" id="GO:0003723">
    <property type="term" value="F:RNA binding"/>
    <property type="evidence" value="ECO:0000318"/>
    <property type="project" value="GO_Central"/>
</dbReference>
<dbReference type="GO" id="GO:0071034">
    <property type="term" value="P:CUT catabolic process"/>
    <property type="evidence" value="ECO:0000318"/>
    <property type="project" value="GO_Central"/>
</dbReference>
<dbReference type="GO" id="GO:0000467">
    <property type="term" value="P:exonucleolytic trimming to generate mature 3'-end of 5.8S rRNA from tricistronic rRNA transcript (SSU-rRNA, 5.8S rRNA, LSU-rRNA)"/>
    <property type="evidence" value="ECO:0000318"/>
    <property type="project" value="GO_Central"/>
</dbReference>
<dbReference type="GO" id="GO:0071035">
    <property type="term" value="P:nuclear polyadenylation-dependent rRNA catabolic process"/>
    <property type="evidence" value="ECO:0000318"/>
    <property type="project" value="GO_Central"/>
</dbReference>
<dbReference type="GO" id="GO:0000956">
    <property type="term" value="P:nuclear-transcribed mRNA catabolic process"/>
    <property type="evidence" value="ECO:0000318"/>
    <property type="project" value="GO_Central"/>
</dbReference>
<dbReference type="GO" id="GO:0071051">
    <property type="term" value="P:poly(A)-dependent snoRNA 3'-end processing"/>
    <property type="evidence" value="ECO:0000318"/>
    <property type="project" value="GO_Central"/>
</dbReference>
<dbReference type="GO" id="GO:0071038">
    <property type="term" value="P:TRAMP-dependent tRNA surveillance pathway"/>
    <property type="evidence" value="ECO:0000318"/>
    <property type="project" value="GO_Central"/>
</dbReference>
<dbReference type="GO" id="GO:0034475">
    <property type="term" value="P:U4 snRNA 3'-end processing"/>
    <property type="evidence" value="ECO:0000318"/>
    <property type="project" value="GO_Central"/>
</dbReference>
<dbReference type="CDD" id="cd22526">
    <property type="entry name" value="KH-I_Rrp40"/>
    <property type="match status" value="1"/>
</dbReference>
<dbReference type="CDD" id="cd05790">
    <property type="entry name" value="S1_Rrp40"/>
    <property type="match status" value="1"/>
</dbReference>
<dbReference type="FunFam" id="2.40.50.140:FF:000112">
    <property type="entry name" value="Exosome complex component RRP40"/>
    <property type="match status" value="1"/>
</dbReference>
<dbReference type="FunFam" id="3.30.1370.10:FF:000038">
    <property type="entry name" value="exosome complex component RRP40"/>
    <property type="match status" value="1"/>
</dbReference>
<dbReference type="FunFam" id="2.40.50.100:FF:000168">
    <property type="entry name" value="Putative exosome complex component rrp40"/>
    <property type="match status" value="1"/>
</dbReference>
<dbReference type="Gene3D" id="2.40.50.100">
    <property type="match status" value="1"/>
</dbReference>
<dbReference type="Gene3D" id="3.30.1370.10">
    <property type="entry name" value="K Homology domain, type 1"/>
    <property type="match status" value="1"/>
</dbReference>
<dbReference type="Gene3D" id="2.40.50.140">
    <property type="entry name" value="Nucleic acid-binding proteins"/>
    <property type="match status" value="1"/>
</dbReference>
<dbReference type="InterPro" id="IPR026699">
    <property type="entry name" value="Exosome_RNA_bind1/RRP40/RRP4"/>
</dbReference>
<dbReference type="InterPro" id="IPR004088">
    <property type="entry name" value="KH_dom_type_1"/>
</dbReference>
<dbReference type="InterPro" id="IPR036612">
    <property type="entry name" value="KH_dom_type_1_sf"/>
</dbReference>
<dbReference type="InterPro" id="IPR012340">
    <property type="entry name" value="NA-bd_OB-fold"/>
</dbReference>
<dbReference type="InterPro" id="IPR049469">
    <property type="entry name" value="RRP40_KH-I"/>
</dbReference>
<dbReference type="InterPro" id="IPR041054">
    <property type="entry name" value="Rrp40_N_euk"/>
</dbReference>
<dbReference type="InterPro" id="IPR037319">
    <property type="entry name" value="Rrp40_S1"/>
</dbReference>
<dbReference type="PANTHER" id="PTHR21321:SF1">
    <property type="entry name" value="EXOSOME COMPLEX COMPONENT RRP40"/>
    <property type="match status" value="1"/>
</dbReference>
<dbReference type="PANTHER" id="PTHR21321">
    <property type="entry name" value="PNAS-3 RELATED"/>
    <property type="match status" value="1"/>
</dbReference>
<dbReference type="Pfam" id="PF15985">
    <property type="entry name" value="KH_6"/>
    <property type="match status" value="1"/>
</dbReference>
<dbReference type="Pfam" id="PF18311">
    <property type="entry name" value="Rrp40_N"/>
    <property type="match status" value="1"/>
</dbReference>
<dbReference type="Pfam" id="PF21262">
    <property type="entry name" value="RRP40_S1"/>
    <property type="match status" value="1"/>
</dbReference>
<dbReference type="SUPFAM" id="SSF54791">
    <property type="entry name" value="Eukaryotic type KH-domain (KH-domain type I)"/>
    <property type="match status" value="1"/>
</dbReference>
<dbReference type="SUPFAM" id="SSF50249">
    <property type="entry name" value="Nucleic acid-binding proteins"/>
    <property type="match status" value="1"/>
</dbReference>
<dbReference type="SUPFAM" id="SSF110324">
    <property type="entry name" value="Ribosomal L27 protein-like"/>
    <property type="match status" value="1"/>
</dbReference>
<comment type="function">
    <text evidence="1">Non-catalytic component of the RNA exosome complex which has 3'-&gt;5' exoribonuclease activity and participates in a multitude of cellular RNA processing and degradation events.</text>
</comment>
<comment type="subunit">
    <text evidence="1">Component of the RNA exosome complex.</text>
</comment>
<comment type="subcellular location">
    <subcellularLocation>
        <location evidence="1">Cytoplasm</location>
    </subcellularLocation>
    <subcellularLocation>
        <location evidence="1">Nucleus</location>
        <location evidence="1">Nucleolus</location>
    </subcellularLocation>
    <subcellularLocation>
        <location evidence="1">Nucleus</location>
    </subcellularLocation>
</comment>
<comment type="similarity">
    <text evidence="2">Belongs to the RRP40 family.</text>
</comment>
<reference key="1">
    <citation type="journal article" date="2002" name="Nature">
        <title>Sequence and analysis of chromosome 2 of Dictyostelium discoideum.</title>
        <authorList>
            <person name="Gloeckner G."/>
            <person name="Eichinger L."/>
            <person name="Szafranski K."/>
            <person name="Pachebat J.A."/>
            <person name="Bankier A.T."/>
            <person name="Dear P.H."/>
            <person name="Lehmann R."/>
            <person name="Baumgart C."/>
            <person name="Parra G."/>
            <person name="Abril J.F."/>
            <person name="Guigo R."/>
            <person name="Kumpf K."/>
            <person name="Tunggal B."/>
            <person name="Cox E.C."/>
            <person name="Quail M.A."/>
            <person name="Platzer M."/>
            <person name="Rosenthal A."/>
            <person name="Noegel A.A."/>
        </authorList>
    </citation>
    <scope>NUCLEOTIDE SEQUENCE [LARGE SCALE GENOMIC DNA]</scope>
    <source>
        <strain>AX4</strain>
    </source>
</reference>
<reference key="2">
    <citation type="journal article" date="2005" name="Nature">
        <title>The genome of the social amoeba Dictyostelium discoideum.</title>
        <authorList>
            <person name="Eichinger L."/>
            <person name="Pachebat J.A."/>
            <person name="Gloeckner G."/>
            <person name="Rajandream M.A."/>
            <person name="Sucgang R."/>
            <person name="Berriman M."/>
            <person name="Song J."/>
            <person name="Olsen R."/>
            <person name="Szafranski K."/>
            <person name="Xu Q."/>
            <person name="Tunggal B."/>
            <person name="Kummerfeld S."/>
            <person name="Madera M."/>
            <person name="Konfortov B.A."/>
            <person name="Rivero F."/>
            <person name="Bankier A.T."/>
            <person name="Lehmann R."/>
            <person name="Hamlin N."/>
            <person name="Davies R."/>
            <person name="Gaudet P."/>
            <person name="Fey P."/>
            <person name="Pilcher K."/>
            <person name="Chen G."/>
            <person name="Saunders D."/>
            <person name="Sodergren E.J."/>
            <person name="Davis P."/>
            <person name="Kerhornou A."/>
            <person name="Nie X."/>
            <person name="Hall N."/>
            <person name="Anjard C."/>
            <person name="Hemphill L."/>
            <person name="Bason N."/>
            <person name="Farbrother P."/>
            <person name="Desany B."/>
            <person name="Just E."/>
            <person name="Morio T."/>
            <person name="Rost R."/>
            <person name="Churcher C.M."/>
            <person name="Cooper J."/>
            <person name="Haydock S."/>
            <person name="van Driessche N."/>
            <person name="Cronin A."/>
            <person name="Goodhead I."/>
            <person name="Muzny D.M."/>
            <person name="Mourier T."/>
            <person name="Pain A."/>
            <person name="Lu M."/>
            <person name="Harper D."/>
            <person name="Lindsay R."/>
            <person name="Hauser H."/>
            <person name="James K.D."/>
            <person name="Quiles M."/>
            <person name="Madan Babu M."/>
            <person name="Saito T."/>
            <person name="Buchrieser C."/>
            <person name="Wardroper A."/>
            <person name="Felder M."/>
            <person name="Thangavelu M."/>
            <person name="Johnson D."/>
            <person name="Knights A."/>
            <person name="Loulseged H."/>
            <person name="Mungall K.L."/>
            <person name="Oliver K."/>
            <person name="Price C."/>
            <person name="Quail M.A."/>
            <person name="Urushihara H."/>
            <person name="Hernandez J."/>
            <person name="Rabbinowitsch E."/>
            <person name="Steffen D."/>
            <person name="Sanders M."/>
            <person name="Ma J."/>
            <person name="Kohara Y."/>
            <person name="Sharp S."/>
            <person name="Simmonds M.N."/>
            <person name="Spiegler S."/>
            <person name="Tivey A."/>
            <person name="Sugano S."/>
            <person name="White B."/>
            <person name="Walker D."/>
            <person name="Woodward J.R."/>
            <person name="Winckler T."/>
            <person name="Tanaka Y."/>
            <person name="Shaulsky G."/>
            <person name="Schleicher M."/>
            <person name="Weinstock G.M."/>
            <person name="Rosenthal A."/>
            <person name="Cox E.C."/>
            <person name="Chisholm R.L."/>
            <person name="Gibbs R.A."/>
            <person name="Loomis W.F."/>
            <person name="Platzer M."/>
            <person name="Kay R.R."/>
            <person name="Williams J.G."/>
            <person name="Dear P.H."/>
            <person name="Noegel A.A."/>
            <person name="Barrell B.G."/>
            <person name="Kuspa A."/>
        </authorList>
    </citation>
    <scope>NUCLEOTIDE SEQUENCE [LARGE SCALE GENOMIC DNA]</scope>
    <source>
        <strain>AX4</strain>
    </source>
</reference>
<sequence>MDTLKDQFVVPGDVIGKIGDLKVRIGPGLLQTKDTVLATKAGVLRYSKFHRFYWIENEQKRYVPQVEDMVIGTIIEKHAESFKVDIGSSCSALLSAYSFEGATKSNKPLLNVGNLIYCRVTVANRDMEPEVVCLSQKQKAEGFGQLIGGYMLNCSLGLSHYLLSEDCFLLQILGKHIPYEIAVGVNGRVWINSGSNHNTIVVSNTIYNSQYIQDDQIEPFILKSLSINETSGLVEQN</sequence>
<accession>Q7KWX9</accession>
<accession>Q550R8</accession>
<evidence type="ECO:0000250" key="1">
    <source>
        <dbReference type="UniProtKB" id="Q9NQT5"/>
    </source>
</evidence>
<evidence type="ECO:0000305" key="2"/>
<feature type="chain" id="PRO_0000352815" description="Putative exosome complex component rrp40">
    <location>
        <begin position="1"/>
        <end position="237"/>
    </location>
</feature>
<feature type="domain" description="S1 motif">
    <location>
        <begin position="67"/>
        <end position="137"/>
    </location>
</feature>
<gene>
    <name type="primary">exosc3</name>
    <name type="synonym">rrp40</name>
    <name type="ORF">DDB_G0276783</name>
</gene>